<keyword id="KW-0963">Cytoplasm</keyword>
<keyword id="KW-0324">Glycolysis</keyword>
<keyword id="KW-0456">Lyase</keyword>
<keyword id="KW-0460">Magnesium</keyword>
<keyword id="KW-0479">Metal-binding</keyword>
<keyword id="KW-1185">Reference proteome</keyword>
<keyword id="KW-0964">Secreted</keyword>
<protein>
    <recommendedName>
        <fullName evidence="1">Enolase</fullName>
        <ecNumber evidence="1">4.2.1.11</ecNumber>
    </recommendedName>
    <alternativeName>
        <fullName evidence="1">2-phospho-D-glycerate hydro-lyase</fullName>
    </alternativeName>
    <alternativeName>
        <fullName evidence="1">2-phosphoglycerate dehydratase</fullName>
    </alternativeName>
</protein>
<organism>
    <name type="scientific">Thermosynechococcus vestitus (strain NIES-2133 / IAM M-273 / BP-1)</name>
    <dbReference type="NCBI Taxonomy" id="197221"/>
    <lineage>
        <taxon>Bacteria</taxon>
        <taxon>Bacillati</taxon>
        <taxon>Cyanobacteriota</taxon>
        <taxon>Cyanophyceae</taxon>
        <taxon>Acaryochloridales</taxon>
        <taxon>Thermosynechococcaceae</taxon>
        <taxon>Thermosynechococcus</taxon>
    </lineage>
</organism>
<comment type="function">
    <text evidence="1">Catalyzes the reversible conversion of 2-phosphoglycerate (2-PG) into phosphoenolpyruvate (PEP). It is essential for the degradation of carbohydrates via glycolysis.</text>
</comment>
<comment type="catalytic activity">
    <reaction evidence="1">
        <text>(2R)-2-phosphoglycerate = phosphoenolpyruvate + H2O</text>
        <dbReference type="Rhea" id="RHEA:10164"/>
        <dbReference type="ChEBI" id="CHEBI:15377"/>
        <dbReference type="ChEBI" id="CHEBI:58289"/>
        <dbReference type="ChEBI" id="CHEBI:58702"/>
        <dbReference type="EC" id="4.2.1.11"/>
    </reaction>
</comment>
<comment type="cofactor">
    <cofactor evidence="1">
        <name>Mg(2+)</name>
        <dbReference type="ChEBI" id="CHEBI:18420"/>
    </cofactor>
    <text evidence="1">Binds a second Mg(2+) ion via substrate during catalysis.</text>
</comment>
<comment type="pathway">
    <text evidence="1">Carbohydrate degradation; glycolysis; pyruvate from D-glyceraldehyde 3-phosphate: step 4/5.</text>
</comment>
<comment type="subcellular location">
    <subcellularLocation>
        <location evidence="1">Cytoplasm</location>
    </subcellularLocation>
    <subcellularLocation>
        <location evidence="1">Secreted</location>
    </subcellularLocation>
    <subcellularLocation>
        <location evidence="1">Cell surface</location>
    </subcellularLocation>
    <text evidence="1">Fractions of enolase are present in both the cytoplasm and on the cell surface.</text>
</comment>
<comment type="similarity">
    <text evidence="1">Belongs to the enolase family.</text>
</comment>
<dbReference type="EC" id="4.2.1.11" evidence="1"/>
<dbReference type="EMBL" id="BA000039">
    <property type="protein sequence ID" value="BAC08209.1"/>
    <property type="molecule type" value="Genomic_DNA"/>
</dbReference>
<dbReference type="RefSeq" id="NP_681447.1">
    <property type="nucleotide sequence ID" value="NC_004113.1"/>
</dbReference>
<dbReference type="RefSeq" id="WP_011056505.1">
    <property type="nucleotide sequence ID" value="NC_004113.1"/>
</dbReference>
<dbReference type="SMR" id="Q8DL40"/>
<dbReference type="STRING" id="197221.gene:10747248"/>
<dbReference type="EnsemblBacteria" id="BAC08209">
    <property type="protein sequence ID" value="BAC08209"/>
    <property type="gene ID" value="BAC08209"/>
</dbReference>
<dbReference type="KEGG" id="tel:tlr0658"/>
<dbReference type="PATRIC" id="fig|197221.4.peg.697"/>
<dbReference type="eggNOG" id="COG0148">
    <property type="taxonomic scope" value="Bacteria"/>
</dbReference>
<dbReference type="UniPathway" id="UPA00109">
    <property type="reaction ID" value="UER00187"/>
</dbReference>
<dbReference type="Proteomes" id="UP000000440">
    <property type="component" value="Chromosome"/>
</dbReference>
<dbReference type="GO" id="GO:0009986">
    <property type="term" value="C:cell surface"/>
    <property type="evidence" value="ECO:0007669"/>
    <property type="project" value="UniProtKB-SubCell"/>
</dbReference>
<dbReference type="GO" id="GO:0005576">
    <property type="term" value="C:extracellular region"/>
    <property type="evidence" value="ECO:0007669"/>
    <property type="project" value="UniProtKB-SubCell"/>
</dbReference>
<dbReference type="GO" id="GO:0000015">
    <property type="term" value="C:phosphopyruvate hydratase complex"/>
    <property type="evidence" value="ECO:0007669"/>
    <property type="project" value="InterPro"/>
</dbReference>
<dbReference type="GO" id="GO:0000287">
    <property type="term" value="F:magnesium ion binding"/>
    <property type="evidence" value="ECO:0007669"/>
    <property type="project" value="UniProtKB-UniRule"/>
</dbReference>
<dbReference type="GO" id="GO:0004634">
    <property type="term" value="F:phosphopyruvate hydratase activity"/>
    <property type="evidence" value="ECO:0007669"/>
    <property type="project" value="UniProtKB-UniRule"/>
</dbReference>
<dbReference type="GO" id="GO:0006096">
    <property type="term" value="P:glycolytic process"/>
    <property type="evidence" value="ECO:0007669"/>
    <property type="project" value="UniProtKB-UniRule"/>
</dbReference>
<dbReference type="CDD" id="cd03313">
    <property type="entry name" value="enolase"/>
    <property type="match status" value="1"/>
</dbReference>
<dbReference type="FunFam" id="3.20.20.120:FF:000001">
    <property type="entry name" value="Enolase"/>
    <property type="match status" value="1"/>
</dbReference>
<dbReference type="FunFam" id="3.30.390.10:FF:000001">
    <property type="entry name" value="Enolase"/>
    <property type="match status" value="1"/>
</dbReference>
<dbReference type="Gene3D" id="3.20.20.120">
    <property type="entry name" value="Enolase-like C-terminal domain"/>
    <property type="match status" value="1"/>
</dbReference>
<dbReference type="Gene3D" id="3.30.390.10">
    <property type="entry name" value="Enolase-like, N-terminal domain"/>
    <property type="match status" value="1"/>
</dbReference>
<dbReference type="HAMAP" id="MF_00318">
    <property type="entry name" value="Enolase"/>
    <property type="match status" value="1"/>
</dbReference>
<dbReference type="InterPro" id="IPR000941">
    <property type="entry name" value="Enolase"/>
</dbReference>
<dbReference type="InterPro" id="IPR036849">
    <property type="entry name" value="Enolase-like_C_sf"/>
</dbReference>
<dbReference type="InterPro" id="IPR029017">
    <property type="entry name" value="Enolase-like_N"/>
</dbReference>
<dbReference type="InterPro" id="IPR020810">
    <property type="entry name" value="Enolase_C"/>
</dbReference>
<dbReference type="InterPro" id="IPR020809">
    <property type="entry name" value="Enolase_CS"/>
</dbReference>
<dbReference type="InterPro" id="IPR020811">
    <property type="entry name" value="Enolase_N"/>
</dbReference>
<dbReference type="NCBIfam" id="TIGR01060">
    <property type="entry name" value="eno"/>
    <property type="match status" value="1"/>
</dbReference>
<dbReference type="PANTHER" id="PTHR11902">
    <property type="entry name" value="ENOLASE"/>
    <property type="match status" value="1"/>
</dbReference>
<dbReference type="PANTHER" id="PTHR11902:SF1">
    <property type="entry name" value="ENOLASE"/>
    <property type="match status" value="1"/>
</dbReference>
<dbReference type="Pfam" id="PF00113">
    <property type="entry name" value="Enolase_C"/>
    <property type="match status" value="1"/>
</dbReference>
<dbReference type="Pfam" id="PF03952">
    <property type="entry name" value="Enolase_N"/>
    <property type="match status" value="1"/>
</dbReference>
<dbReference type="PIRSF" id="PIRSF001400">
    <property type="entry name" value="Enolase"/>
    <property type="match status" value="1"/>
</dbReference>
<dbReference type="PRINTS" id="PR00148">
    <property type="entry name" value="ENOLASE"/>
</dbReference>
<dbReference type="SFLD" id="SFLDS00001">
    <property type="entry name" value="Enolase"/>
    <property type="match status" value="1"/>
</dbReference>
<dbReference type="SFLD" id="SFLDF00002">
    <property type="entry name" value="enolase"/>
    <property type="match status" value="1"/>
</dbReference>
<dbReference type="SMART" id="SM01192">
    <property type="entry name" value="Enolase_C"/>
    <property type="match status" value="1"/>
</dbReference>
<dbReference type="SMART" id="SM01193">
    <property type="entry name" value="Enolase_N"/>
    <property type="match status" value="1"/>
</dbReference>
<dbReference type="SUPFAM" id="SSF51604">
    <property type="entry name" value="Enolase C-terminal domain-like"/>
    <property type="match status" value="1"/>
</dbReference>
<dbReference type="SUPFAM" id="SSF54826">
    <property type="entry name" value="Enolase N-terminal domain-like"/>
    <property type="match status" value="1"/>
</dbReference>
<dbReference type="PROSITE" id="PS00164">
    <property type="entry name" value="ENOLASE"/>
    <property type="match status" value="1"/>
</dbReference>
<reference key="1">
    <citation type="journal article" date="2002" name="DNA Res.">
        <title>Complete genome structure of the thermophilic cyanobacterium Thermosynechococcus elongatus BP-1.</title>
        <authorList>
            <person name="Nakamura Y."/>
            <person name="Kaneko T."/>
            <person name="Sato S."/>
            <person name="Ikeuchi M."/>
            <person name="Katoh H."/>
            <person name="Sasamoto S."/>
            <person name="Watanabe A."/>
            <person name="Iriguchi M."/>
            <person name="Kawashima K."/>
            <person name="Kimura T."/>
            <person name="Kishida Y."/>
            <person name="Kiyokawa C."/>
            <person name="Kohara M."/>
            <person name="Matsumoto M."/>
            <person name="Matsuno A."/>
            <person name="Nakazaki N."/>
            <person name="Shimpo S."/>
            <person name="Sugimoto M."/>
            <person name="Takeuchi C."/>
            <person name="Yamada M."/>
            <person name="Tabata S."/>
        </authorList>
    </citation>
    <scope>NUCLEOTIDE SEQUENCE [LARGE SCALE GENOMIC DNA]</scope>
    <source>
        <strain>NIES-2133 / IAM M-273 / BP-1</strain>
    </source>
</reference>
<evidence type="ECO:0000255" key="1">
    <source>
        <dbReference type="HAMAP-Rule" id="MF_00318"/>
    </source>
</evidence>
<gene>
    <name evidence="1" type="primary">eno</name>
    <name type="ordered locus">tlr0658</name>
</gene>
<sequence length="426" mass="45754">MMDTAIATIRAREILDSRGRPTVEAEVELECGIVGLAQVPSGASTGSFEAHELRDGDPKRYGGKGVLSAVENIETRILSALVDLNALDQTVIDQCLLELDGSENKSNLGANAILAVSLATAKAAAEYLGQPLYRYLGGPLANVLPVPMMNVINGGAHAANNIDFQEFMIMPIGAPSFREGLRWGAEVFAALSKVLADKGLLTGVGDEGGFAPNLDSNQAALDILLQAIETAGYRPGTDVALALDVAANEFYEDGKYVFDNTSRTASELIRYYDQLVSTYPIISIEDGLQEEDWDNWALLTETLGSRIQLVGDDLFVTNPKRLQRGIDNGVANAILIKLNQIGSLTETLQTIDLATRKGYRAVISHRSGETEDTTIADLAVATRAGQIKTGSLCRSERVAKYNRLLRIEAELGDQAVYAPKVGLGPR</sequence>
<proteinExistence type="inferred from homology"/>
<accession>Q8DL40</accession>
<name>ENO_THEVB</name>
<feature type="chain" id="PRO_0000133990" description="Enolase">
    <location>
        <begin position="1"/>
        <end position="426"/>
    </location>
</feature>
<feature type="active site" description="Proton donor" evidence="1">
    <location>
        <position position="207"/>
    </location>
</feature>
<feature type="active site" description="Proton acceptor" evidence="1">
    <location>
        <position position="337"/>
    </location>
</feature>
<feature type="binding site" evidence="1">
    <location>
        <position position="165"/>
    </location>
    <ligand>
        <name>(2R)-2-phosphoglycerate</name>
        <dbReference type="ChEBI" id="CHEBI:58289"/>
    </ligand>
</feature>
<feature type="binding site" evidence="1">
    <location>
        <position position="244"/>
    </location>
    <ligand>
        <name>Mg(2+)</name>
        <dbReference type="ChEBI" id="CHEBI:18420"/>
    </ligand>
</feature>
<feature type="binding site" evidence="1">
    <location>
        <position position="285"/>
    </location>
    <ligand>
        <name>Mg(2+)</name>
        <dbReference type="ChEBI" id="CHEBI:18420"/>
    </ligand>
</feature>
<feature type="binding site" evidence="1">
    <location>
        <position position="312"/>
    </location>
    <ligand>
        <name>Mg(2+)</name>
        <dbReference type="ChEBI" id="CHEBI:18420"/>
    </ligand>
</feature>
<feature type="binding site" evidence="1">
    <location>
        <position position="337"/>
    </location>
    <ligand>
        <name>(2R)-2-phosphoglycerate</name>
        <dbReference type="ChEBI" id="CHEBI:58289"/>
    </ligand>
</feature>
<feature type="binding site" evidence="1">
    <location>
        <position position="366"/>
    </location>
    <ligand>
        <name>(2R)-2-phosphoglycerate</name>
        <dbReference type="ChEBI" id="CHEBI:58289"/>
    </ligand>
</feature>
<feature type="binding site" evidence="1">
    <location>
        <position position="367"/>
    </location>
    <ligand>
        <name>(2R)-2-phosphoglycerate</name>
        <dbReference type="ChEBI" id="CHEBI:58289"/>
    </ligand>
</feature>
<feature type="binding site" evidence="1">
    <location>
        <position position="388"/>
    </location>
    <ligand>
        <name>(2R)-2-phosphoglycerate</name>
        <dbReference type="ChEBI" id="CHEBI:58289"/>
    </ligand>
</feature>